<evidence type="ECO:0000255" key="1">
    <source>
        <dbReference type="HAMAP-Rule" id="MF_00218"/>
    </source>
</evidence>
<evidence type="ECO:0000305" key="2"/>
<dbReference type="EC" id="4.1.1.37" evidence="1"/>
<dbReference type="EMBL" id="CR378674">
    <property type="protein sequence ID" value="CAG21712.1"/>
    <property type="status" value="ALT_INIT"/>
    <property type="molecule type" value="Genomic_DNA"/>
</dbReference>
<dbReference type="RefSeq" id="WP_041394560.1">
    <property type="nucleotide sequence ID" value="NC_006370.1"/>
</dbReference>
<dbReference type="SMR" id="Q6LLW6"/>
<dbReference type="STRING" id="298386.PBPRA3428"/>
<dbReference type="KEGG" id="ppr:PBPRA3428"/>
<dbReference type="eggNOG" id="COG0407">
    <property type="taxonomic scope" value="Bacteria"/>
</dbReference>
<dbReference type="HOGENOM" id="CLU_040933_0_0_6"/>
<dbReference type="UniPathway" id="UPA00251">
    <property type="reaction ID" value="UER00321"/>
</dbReference>
<dbReference type="Proteomes" id="UP000000593">
    <property type="component" value="Chromosome 1"/>
</dbReference>
<dbReference type="GO" id="GO:0005829">
    <property type="term" value="C:cytosol"/>
    <property type="evidence" value="ECO:0007669"/>
    <property type="project" value="TreeGrafter"/>
</dbReference>
<dbReference type="GO" id="GO:0004853">
    <property type="term" value="F:uroporphyrinogen decarboxylase activity"/>
    <property type="evidence" value="ECO:0007669"/>
    <property type="project" value="UniProtKB-UniRule"/>
</dbReference>
<dbReference type="GO" id="GO:0019353">
    <property type="term" value="P:protoporphyrinogen IX biosynthetic process from glutamate"/>
    <property type="evidence" value="ECO:0007669"/>
    <property type="project" value="TreeGrafter"/>
</dbReference>
<dbReference type="CDD" id="cd00717">
    <property type="entry name" value="URO-D"/>
    <property type="match status" value="1"/>
</dbReference>
<dbReference type="FunFam" id="3.20.20.210:FF:000001">
    <property type="entry name" value="Uroporphyrinogen decarboxylase"/>
    <property type="match status" value="1"/>
</dbReference>
<dbReference type="Gene3D" id="3.20.20.210">
    <property type="match status" value="1"/>
</dbReference>
<dbReference type="HAMAP" id="MF_00218">
    <property type="entry name" value="URO_D"/>
    <property type="match status" value="1"/>
</dbReference>
<dbReference type="InterPro" id="IPR038071">
    <property type="entry name" value="UROD/MetE-like_sf"/>
</dbReference>
<dbReference type="InterPro" id="IPR006361">
    <property type="entry name" value="Uroporphyrinogen_deCO2ase_HemE"/>
</dbReference>
<dbReference type="InterPro" id="IPR000257">
    <property type="entry name" value="Uroporphyrinogen_deCOase"/>
</dbReference>
<dbReference type="NCBIfam" id="TIGR01464">
    <property type="entry name" value="hemE"/>
    <property type="match status" value="1"/>
</dbReference>
<dbReference type="PANTHER" id="PTHR21091">
    <property type="entry name" value="METHYLTETRAHYDROFOLATE:HOMOCYSTEINE METHYLTRANSFERASE RELATED"/>
    <property type="match status" value="1"/>
</dbReference>
<dbReference type="PANTHER" id="PTHR21091:SF169">
    <property type="entry name" value="UROPORPHYRINOGEN DECARBOXYLASE"/>
    <property type="match status" value="1"/>
</dbReference>
<dbReference type="Pfam" id="PF01208">
    <property type="entry name" value="URO-D"/>
    <property type="match status" value="1"/>
</dbReference>
<dbReference type="SUPFAM" id="SSF51726">
    <property type="entry name" value="UROD/MetE-like"/>
    <property type="match status" value="1"/>
</dbReference>
<dbReference type="PROSITE" id="PS00906">
    <property type="entry name" value="UROD_1"/>
    <property type="match status" value="1"/>
</dbReference>
<dbReference type="PROSITE" id="PS00907">
    <property type="entry name" value="UROD_2"/>
    <property type="match status" value="1"/>
</dbReference>
<accession>Q6LLW6</accession>
<reference key="1">
    <citation type="journal article" date="2005" name="Science">
        <title>Life at depth: Photobacterium profundum genome sequence and expression analysis.</title>
        <authorList>
            <person name="Vezzi A."/>
            <person name="Campanaro S."/>
            <person name="D'Angelo M."/>
            <person name="Simonato F."/>
            <person name="Vitulo N."/>
            <person name="Lauro F.M."/>
            <person name="Cestaro A."/>
            <person name="Malacrida G."/>
            <person name="Simionati B."/>
            <person name="Cannata N."/>
            <person name="Romualdi C."/>
            <person name="Bartlett D.H."/>
            <person name="Valle G."/>
        </authorList>
    </citation>
    <scope>NUCLEOTIDE SEQUENCE [LARGE SCALE GENOMIC DNA]</scope>
    <source>
        <strain>ATCC BAA-1253 / SS9</strain>
    </source>
</reference>
<feature type="chain" id="PRO_0000325672" description="Uroporphyrinogen decarboxylase">
    <location>
        <begin position="1"/>
        <end position="355"/>
    </location>
</feature>
<feature type="binding site" evidence="1">
    <location>
        <begin position="27"/>
        <end position="31"/>
    </location>
    <ligand>
        <name>substrate</name>
    </ligand>
</feature>
<feature type="binding site" evidence="1">
    <location>
        <position position="77"/>
    </location>
    <ligand>
        <name>substrate</name>
    </ligand>
</feature>
<feature type="binding site" evidence="1">
    <location>
        <position position="154"/>
    </location>
    <ligand>
        <name>substrate</name>
    </ligand>
</feature>
<feature type="binding site" evidence="1">
    <location>
        <position position="209"/>
    </location>
    <ligand>
        <name>substrate</name>
    </ligand>
</feature>
<feature type="binding site" evidence="1">
    <location>
        <position position="328"/>
    </location>
    <ligand>
        <name>substrate</name>
    </ligand>
</feature>
<feature type="site" description="Transition state stabilizer" evidence="1">
    <location>
        <position position="77"/>
    </location>
</feature>
<keyword id="KW-0963">Cytoplasm</keyword>
<keyword id="KW-0210">Decarboxylase</keyword>
<keyword id="KW-0456">Lyase</keyword>
<keyword id="KW-0627">Porphyrin biosynthesis</keyword>
<keyword id="KW-1185">Reference proteome</keyword>
<organism>
    <name type="scientific">Photobacterium profundum (strain SS9)</name>
    <dbReference type="NCBI Taxonomy" id="298386"/>
    <lineage>
        <taxon>Bacteria</taxon>
        <taxon>Pseudomonadati</taxon>
        <taxon>Pseudomonadota</taxon>
        <taxon>Gammaproteobacteria</taxon>
        <taxon>Vibrionales</taxon>
        <taxon>Vibrionaceae</taxon>
        <taxon>Photobacterium</taxon>
    </lineage>
</organism>
<name>DCUP_PHOPR</name>
<proteinExistence type="inferred from homology"/>
<sequence length="355" mass="39363">MSELKNDRYLRALLKQPVDCTPVWMMRQAGRYLPEYRATRSVAGDFMSLCKNAELASEVTLQPLRRFPLDAAILFSDILTIPDAMGLGLYFEAGEGPKFERPITCKADVDKIGLPDPEGELQYVMNAVRQIRKDLQGEVPLIGFSGSPWTLATYMVEGGSSKAFTKIKKMMYAEPATLHLLLDKLADSVVEYLNAQIKAGAQSVMVFDTWGGVLTPSDYNEFSLRYMHKIVDGLIRENDGHRVPVTLFTKNGGMWLEQIAATGCDAIGLDWTINIADANRRVGDKVALQGNMDPSILYAQPERIRQEVATILEGYGDEGTGHVFNLGHGIHLDVPPENAGVFVDAVHELSKPYHK</sequence>
<gene>
    <name evidence="1" type="primary">hemE</name>
    <name type="ordered locus">PBPRA3428</name>
</gene>
<comment type="function">
    <text evidence="1">Catalyzes the decarboxylation of four acetate groups of uroporphyrinogen-III to yield coproporphyrinogen-III.</text>
</comment>
<comment type="catalytic activity">
    <reaction evidence="1">
        <text>uroporphyrinogen III + 4 H(+) = coproporphyrinogen III + 4 CO2</text>
        <dbReference type="Rhea" id="RHEA:19865"/>
        <dbReference type="ChEBI" id="CHEBI:15378"/>
        <dbReference type="ChEBI" id="CHEBI:16526"/>
        <dbReference type="ChEBI" id="CHEBI:57308"/>
        <dbReference type="ChEBI" id="CHEBI:57309"/>
        <dbReference type="EC" id="4.1.1.37"/>
    </reaction>
</comment>
<comment type="pathway">
    <text evidence="1">Porphyrin-containing compound metabolism; protoporphyrin-IX biosynthesis; coproporphyrinogen-III from 5-aminolevulinate: step 4/4.</text>
</comment>
<comment type="subunit">
    <text evidence="1">Homodimer.</text>
</comment>
<comment type="subcellular location">
    <subcellularLocation>
        <location evidence="1">Cytoplasm</location>
    </subcellularLocation>
</comment>
<comment type="similarity">
    <text evidence="1">Belongs to the uroporphyrinogen decarboxylase family.</text>
</comment>
<comment type="sequence caution" evidence="2">
    <conflict type="erroneous initiation">
        <sequence resource="EMBL-CDS" id="CAG21712"/>
    </conflict>
</comment>
<protein>
    <recommendedName>
        <fullName evidence="1">Uroporphyrinogen decarboxylase</fullName>
        <shortName evidence="1">UPD</shortName>
        <shortName evidence="1">URO-D</shortName>
        <ecNumber evidence="1">4.1.1.37</ecNumber>
    </recommendedName>
</protein>